<reference key="1">
    <citation type="journal article" date="2005" name="Genome Res.">
        <title>Comparative and functional genomic analyses of the pathogenicity of phytopathogen Xanthomonas campestris pv. campestris.</title>
        <authorList>
            <person name="Qian W."/>
            <person name="Jia Y."/>
            <person name="Ren S.-X."/>
            <person name="He Y.-Q."/>
            <person name="Feng J.-X."/>
            <person name="Lu L.-F."/>
            <person name="Sun Q."/>
            <person name="Ying G."/>
            <person name="Tang D.-J."/>
            <person name="Tang H."/>
            <person name="Wu W."/>
            <person name="Hao P."/>
            <person name="Wang L."/>
            <person name="Jiang B.-L."/>
            <person name="Zeng S."/>
            <person name="Gu W.-Y."/>
            <person name="Lu G."/>
            <person name="Rong L."/>
            <person name="Tian Y."/>
            <person name="Yao Z."/>
            <person name="Fu G."/>
            <person name="Chen B."/>
            <person name="Fang R."/>
            <person name="Qiang B."/>
            <person name="Chen Z."/>
            <person name="Zhao G.-P."/>
            <person name="Tang J.-L."/>
            <person name="He C."/>
        </authorList>
    </citation>
    <scope>NUCLEOTIDE SEQUENCE [LARGE SCALE GENOMIC DNA]</scope>
    <source>
        <strain>8004</strain>
    </source>
</reference>
<name>UVRC_XANC8</name>
<keyword id="KW-0963">Cytoplasm</keyword>
<keyword id="KW-0227">DNA damage</keyword>
<keyword id="KW-0228">DNA excision</keyword>
<keyword id="KW-0234">DNA repair</keyword>
<keyword id="KW-0267">Excision nuclease</keyword>
<keyword id="KW-0742">SOS response</keyword>
<accession>Q4UV60</accession>
<sequence length="618" mass="67793">MSARPQADFDGKAFAARLSTAPGVYRMYAADDSLLYVGKAGALRKRVGSYFNGTPKNARLTSMLSQVARMDVTVTRSEAEALLLENQLIKSLSPRYNVSLRDDKSYPYVLLTREDWPRIALHRGPRAVNGRYFGPYAGVTAVRETLNLMHKLFKLRSCEDSVFRNRSRPCLQYQIGRCSAPCVDLVAAQDYQEAVRRATMFLEGKSDQLGEEIMHSMQQASEALEFERAARLRDLLSSLRSMQNRQYVDGRAADLDVLACATQSSQACVLLLSFRDGRNLGTRSFFPKTNGEDSAEEILAAFVSQYYAEHAPPREILLDREIPDAELIEAALSAAAEHKVALKWNVRGERAGYLLLASRNAQLTLVTELTSQSAQHARSEALREMLGLAEQVKRVECFDISHTMGEATVASCVVFDASGPVRGQYRRFNISGITPGDDYAAMRQAIERRFRRAVEENGVLPDVLLIDGGAGQLAQAQAALADLGIENVLLVGVAKGEERRAGHEALILADGRELRPGAASPALQFIQQVRDEAHRFAITGHRGRRQKARMTSKLEDIPGIGPRRRASLLKHFGGLVGLKAAGEAEIARVEGVNAALAARIYANLHGLALPDAAGESSP</sequence>
<evidence type="ECO:0000255" key="1">
    <source>
        <dbReference type="HAMAP-Rule" id="MF_00203"/>
    </source>
</evidence>
<protein>
    <recommendedName>
        <fullName evidence="1">UvrABC system protein C</fullName>
        <shortName evidence="1">Protein UvrC</shortName>
    </recommendedName>
    <alternativeName>
        <fullName evidence="1">Excinuclease ABC subunit C</fullName>
    </alternativeName>
</protein>
<comment type="function">
    <text evidence="1">The UvrABC repair system catalyzes the recognition and processing of DNA lesions. UvrC both incises the 5' and 3' sides of the lesion. The N-terminal half is responsible for the 3' incision and the C-terminal half is responsible for the 5' incision.</text>
</comment>
<comment type="subunit">
    <text evidence="1">Interacts with UvrB in an incision complex.</text>
</comment>
<comment type="subcellular location">
    <subcellularLocation>
        <location evidence="1">Cytoplasm</location>
    </subcellularLocation>
</comment>
<comment type="similarity">
    <text evidence="1">Belongs to the UvrC family.</text>
</comment>
<proteinExistence type="inferred from homology"/>
<dbReference type="EMBL" id="CP000050">
    <property type="protein sequence ID" value="AAY49063.1"/>
    <property type="molecule type" value="Genomic_DNA"/>
</dbReference>
<dbReference type="RefSeq" id="WP_011037266.1">
    <property type="nucleotide sequence ID" value="NZ_CP155948.1"/>
</dbReference>
<dbReference type="SMR" id="Q4UV60"/>
<dbReference type="KEGG" id="xcb:XC_2000"/>
<dbReference type="HOGENOM" id="CLU_014841_3_0_6"/>
<dbReference type="Proteomes" id="UP000000420">
    <property type="component" value="Chromosome"/>
</dbReference>
<dbReference type="GO" id="GO:0005737">
    <property type="term" value="C:cytoplasm"/>
    <property type="evidence" value="ECO:0007669"/>
    <property type="project" value="UniProtKB-SubCell"/>
</dbReference>
<dbReference type="GO" id="GO:0009380">
    <property type="term" value="C:excinuclease repair complex"/>
    <property type="evidence" value="ECO:0007669"/>
    <property type="project" value="InterPro"/>
</dbReference>
<dbReference type="GO" id="GO:0003677">
    <property type="term" value="F:DNA binding"/>
    <property type="evidence" value="ECO:0007669"/>
    <property type="project" value="UniProtKB-UniRule"/>
</dbReference>
<dbReference type="GO" id="GO:0009381">
    <property type="term" value="F:excinuclease ABC activity"/>
    <property type="evidence" value="ECO:0007669"/>
    <property type="project" value="UniProtKB-UniRule"/>
</dbReference>
<dbReference type="GO" id="GO:0006289">
    <property type="term" value="P:nucleotide-excision repair"/>
    <property type="evidence" value="ECO:0007669"/>
    <property type="project" value="UniProtKB-UniRule"/>
</dbReference>
<dbReference type="GO" id="GO:0009432">
    <property type="term" value="P:SOS response"/>
    <property type="evidence" value="ECO:0007669"/>
    <property type="project" value="UniProtKB-UniRule"/>
</dbReference>
<dbReference type="CDD" id="cd10434">
    <property type="entry name" value="GIY-YIG_UvrC_Cho"/>
    <property type="match status" value="1"/>
</dbReference>
<dbReference type="FunFam" id="1.10.150.20:FF:000005">
    <property type="entry name" value="UvrABC system protein C"/>
    <property type="match status" value="1"/>
</dbReference>
<dbReference type="FunFam" id="3.30.420.340:FF:000001">
    <property type="entry name" value="UvrABC system protein C"/>
    <property type="match status" value="1"/>
</dbReference>
<dbReference type="FunFam" id="3.40.1440.10:FF:000001">
    <property type="entry name" value="UvrABC system protein C"/>
    <property type="match status" value="1"/>
</dbReference>
<dbReference type="Gene3D" id="1.10.150.20">
    <property type="entry name" value="5' to 3' exonuclease, C-terminal subdomain"/>
    <property type="match status" value="1"/>
</dbReference>
<dbReference type="Gene3D" id="3.40.1440.10">
    <property type="entry name" value="GIY-YIG endonuclease"/>
    <property type="match status" value="1"/>
</dbReference>
<dbReference type="Gene3D" id="4.10.860.10">
    <property type="entry name" value="UVR domain"/>
    <property type="match status" value="1"/>
</dbReference>
<dbReference type="Gene3D" id="3.30.420.340">
    <property type="entry name" value="UvrC, RNAse H endonuclease domain"/>
    <property type="match status" value="1"/>
</dbReference>
<dbReference type="HAMAP" id="MF_00203">
    <property type="entry name" value="UvrC"/>
    <property type="match status" value="1"/>
</dbReference>
<dbReference type="InterPro" id="IPR000305">
    <property type="entry name" value="GIY-YIG_endonuc"/>
</dbReference>
<dbReference type="InterPro" id="IPR035901">
    <property type="entry name" value="GIY-YIG_endonuc_sf"/>
</dbReference>
<dbReference type="InterPro" id="IPR047296">
    <property type="entry name" value="GIY-YIG_UvrC_Cho"/>
</dbReference>
<dbReference type="InterPro" id="IPR003583">
    <property type="entry name" value="Hlx-hairpin-Hlx_DNA-bd_motif"/>
</dbReference>
<dbReference type="InterPro" id="IPR010994">
    <property type="entry name" value="RuvA_2-like"/>
</dbReference>
<dbReference type="InterPro" id="IPR001943">
    <property type="entry name" value="UVR_dom"/>
</dbReference>
<dbReference type="InterPro" id="IPR036876">
    <property type="entry name" value="UVR_dom_sf"/>
</dbReference>
<dbReference type="InterPro" id="IPR050066">
    <property type="entry name" value="UvrABC_protein_C"/>
</dbReference>
<dbReference type="InterPro" id="IPR004791">
    <property type="entry name" value="UvrC"/>
</dbReference>
<dbReference type="InterPro" id="IPR001162">
    <property type="entry name" value="UvrC_RNase_H_dom"/>
</dbReference>
<dbReference type="InterPro" id="IPR038476">
    <property type="entry name" value="UvrC_RNase_H_dom_sf"/>
</dbReference>
<dbReference type="NCBIfam" id="TIGR00194">
    <property type="entry name" value="uvrC"/>
    <property type="match status" value="1"/>
</dbReference>
<dbReference type="PANTHER" id="PTHR30562:SF1">
    <property type="entry name" value="UVRABC SYSTEM PROTEIN C"/>
    <property type="match status" value="1"/>
</dbReference>
<dbReference type="PANTHER" id="PTHR30562">
    <property type="entry name" value="UVRC/OXIDOREDUCTASE"/>
    <property type="match status" value="1"/>
</dbReference>
<dbReference type="Pfam" id="PF01541">
    <property type="entry name" value="GIY-YIG"/>
    <property type="match status" value="1"/>
</dbReference>
<dbReference type="Pfam" id="PF14520">
    <property type="entry name" value="HHH_5"/>
    <property type="match status" value="1"/>
</dbReference>
<dbReference type="Pfam" id="PF02151">
    <property type="entry name" value="UVR"/>
    <property type="match status" value="1"/>
</dbReference>
<dbReference type="Pfam" id="PF22920">
    <property type="entry name" value="UvrC_RNaseH"/>
    <property type="match status" value="1"/>
</dbReference>
<dbReference type="Pfam" id="PF08459">
    <property type="entry name" value="UvrC_RNaseH_dom"/>
    <property type="match status" value="1"/>
</dbReference>
<dbReference type="SMART" id="SM00465">
    <property type="entry name" value="GIYc"/>
    <property type="match status" value="1"/>
</dbReference>
<dbReference type="SMART" id="SM00278">
    <property type="entry name" value="HhH1"/>
    <property type="match status" value="2"/>
</dbReference>
<dbReference type="SUPFAM" id="SSF46600">
    <property type="entry name" value="C-terminal UvrC-binding domain of UvrB"/>
    <property type="match status" value="1"/>
</dbReference>
<dbReference type="SUPFAM" id="SSF82771">
    <property type="entry name" value="GIY-YIG endonuclease"/>
    <property type="match status" value="1"/>
</dbReference>
<dbReference type="SUPFAM" id="SSF47781">
    <property type="entry name" value="RuvA domain 2-like"/>
    <property type="match status" value="1"/>
</dbReference>
<dbReference type="PROSITE" id="PS50164">
    <property type="entry name" value="GIY_YIG"/>
    <property type="match status" value="1"/>
</dbReference>
<dbReference type="PROSITE" id="PS50151">
    <property type="entry name" value="UVR"/>
    <property type="match status" value="1"/>
</dbReference>
<dbReference type="PROSITE" id="PS50165">
    <property type="entry name" value="UVRC"/>
    <property type="match status" value="1"/>
</dbReference>
<organism>
    <name type="scientific">Xanthomonas campestris pv. campestris (strain 8004)</name>
    <dbReference type="NCBI Taxonomy" id="314565"/>
    <lineage>
        <taxon>Bacteria</taxon>
        <taxon>Pseudomonadati</taxon>
        <taxon>Pseudomonadota</taxon>
        <taxon>Gammaproteobacteria</taxon>
        <taxon>Lysobacterales</taxon>
        <taxon>Lysobacteraceae</taxon>
        <taxon>Xanthomonas</taxon>
    </lineage>
</organism>
<gene>
    <name evidence="1" type="primary">uvrC</name>
    <name type="ordered locus">XC_2000</name>
</gene>
<feature type="chain" id="PRO_0000227493" description="UvrABC system protein C">
    <location>
        <begin position="1"/>
        <end position="618"/>
    </location>
</feature>
<feature type="domain" description="GIY-YIG" evidence="1">
    <location>
        <begin position="20"/>
        <end position="98"/>
    </location>
</feature>
<feature type="domain" description="UVR" evidence="1">
    <location>
        <begin position="207"/>
        <end position="242"/>
    </location>
</feature>